<dbReference type="EC" id="1.1.1.94" evidence="1"/>
<dbReference type="EMBL" id="AE006468">
    <property type="protein sequence ID" value="AAL22559.1"/>
    <property type="molecule type" value="Genomic_DNA"/>
</dbReference>
<dbReference type="EMBL" id="X59594">
    <property type="status" value="NOT_ANNOTATED_CDS"/>
    <property type="molecule type" value="Genomic_DNA"/>
</dbReference>
<dbReference type="RefSeq" id="NP_462600.1">
    <property type="nucleotide sequence ID" value="NC_003197.2"/>
</dbReference>
<dbReference type="RefSeq" id="WP_001076596.1">
    <property type="nucleotide sequence ID" value="NC_003197.2"/>
</dbReference>
<dbReference type="SMR" id="P0A1P2"/>
<dbReference type="STRING" id="99287.STM3700"/>
<dbReference type="PaxDb" id="99287-STM3700"/>
<dbReference type="GeneID" id="1255224"/>
<dbReference type="KEGG" id="stm:STM3700"/>
<dbReference type="PATRIC" id="fig|99287.12.peg.3913"/>
<dbReference type="HOGENOM" id="CLU_033449_0_2_6"/>
<dbReference type="OMA" id="NRMFGNM"/>
<dbReference type="PhylomeDB" id="P0A1P2"/>
<dbReference type="BioCyc" id="SENT99287:STM3700-MONOMER"/>
<dbReference type="UniPathway" id="UPA00940"/>
<dbReference type="Proteomes" id="UP000001014">
    <property type="component" value="Chromosome"/>
</dbReference>
<dbReference type="GO" id="GO:0005829">
    <property type="term" value="C:cytosol"/>
    <property type="evidence" value="ECO:0000318"/>
    <property type="project" value="GO_Central"/>
</dbReference>
<dbReference type="GO" id="GO:0047952">
    <property type="term" value="F:glycerol-3-phosphate dehydrogenase [NAD(P)+] activity"/>
    <property type="evidence" value="ECO:0000318"/>
    <property type="project" value="GO_Central"/>
</dbReference>
<dbReference type="GO" id="GO:0051287">
    <property type="term" value="F:NAD binding"/>
    <property type="evidence" value="ECO:0007669"/>
    <property type="project" value="InterPro"/>
</dbReference>
<dbReference type="GO" id="GO:0005975">
    <property type="term" value="P:carbohydrate metabolic process"/>
    <property type="evidence" value="ECO:0007669"/>
    <property type="project" value="InterPro"/>
</dbReference>
<dbReference type="GO" id="GO:0046167">
    <property type="term" value="P:glycerol-3-phosphate biosynthetic process"/>
    <property type="evidence" value="ECO:0007669"/>
    <property type="project" value="UniProtKB-UniRule"/>
</dbReference>
<dbReference type="GO" id="GO:0046168">
    <property type="term" value="P:glycerol-3-phosphate catabolic process"/>
    <property type="evidence" value="ECO:0007669"/>
    <property type="project" value="InterPro"/>
</dbReference>
<dbReference type="GO" id="GO:0006072">
    <property type="term" value="P:glycerol-3-phosphate metabolic process"/>
    <property type="evidence" value="ECO:0000318"/>
    <property type="project" value="GO_Central"/>
</dbReference>
<dbReference type="GO" id="GO:0046474">
    <property type="term" value="P:glycerophospholipid biosynthetic process"/>
    <property type="evidence" value="ECO:0000318"/>
    <property type="project" value="GO_Central"/>
</dbReference>
<dbReference type="FunFam" id="1.10.1040.10:FF:000001">
    <property type="entry name" value="Glycerol-3-phosphate dehydrogenase [NAD(P)+]"/>
    <property type="match status" value="1"/>
</dbReference>
<dbReference type="FunFam" id="3.40.50.720:FF:000019">
    <property type="entry name" value="Glycerol-3-phosphate dehydrogenase [NAD(P)+]"/>
    <property type="match status" value="1"/>
</dbReference>
<dbReference type="Gene3D" id="1.10.1040.10">
    <property type="entry name" value="N-(1-d-carboxylethyl)-l-norvaline Dehydrogenase, domain 2"/>
    <property type="match status" value="1"/>
</dbReference>
<dbReference type="Gene3D" id="3.40.50.720">
    <property type="entry name" value="NAD(P)-binding Rossmann-like Domain"/>
    <property type="match status" value="1"/>
</dbReference>
<dbReference type="HAMAP" id="MF_00394">
    <property type="entry name" value="NAD_Glyc3P_dehydrog"/>
    <property type="match status" value="1"/>
</dbReference>
<dbReference type="InterPro" id="IPR008927">
    <property type="entry name" value="6-PGluconate_DH-like_C_sf"/>
</dbReference>
<dbReference type="InterPro" id="IPR013328">
    <property type="entry name" value="6PGD_dom2"/>
</dbReference>
<dbReference type="InterPro" id="IPR006168">
    <property type="entry name" value="G3P_DH_NAD-dep"/>
</dbReference>
<dbReference type="InterPro" id="IPR006109">
    <property type="entry name" value="G3P_DH_NAD-dep_C"/>
</dbReference>
<dbReference type="InterPro" id="IPR011128">
    <property type="entry name" value="G3P_DH_NAD-dep_N"/>
</dbReference>
<dbReference type="InterPro" id="IPR036291">
    <property type="entry name" value="NAD(P)-bd_dom_sf"/>
</dbReference>
<dbReference type="NCBIfam" id="NF000939">
    <property type="entry name" value="PRK00094.1-1"/>
    <property type="match status" value="1"/>
</dbReference>
<dbReference type="NCBIfam" id="NF000940">
    <property type="entry name" value="PRK00094.1-2"/>
    <property type="match status" value="1"/>
</dbReference>
<dbReference type="NCBIfam" id="NF000942">
    <property type="entry name" value="PRK00094.1-4"/>
    <property type="match status" value="1"/>
</dbReference>
<dbReference type="PANTHER" id="PTHR11728">
    <property type="entry name" value="GLYCEROL-3-PHOSPHATE DEHYDROGENASE"/>
    <property type="match status" value="1"/>
</dbReference>
<dbReference type="PANTHER" id="PTHR11728:SF1">
    <property type="entry name" value="GLYCEROL-3-PHOSPHATE DEHYDROGENASE [NAD(+)] 2, CHLOROPLASTIC"/>
    <property type="match status" value="1"/>
</dbReference>
<dbReference type="Pfam" id="PF07479">
    <property type="entry name" value="NAD_Gly3P_dh_C"/>
    <property type="match status" value="1"/>
</dbReference>
<dbReference type="Pfam" id="PF01210">
    <property type="entry name" value="NAD_Gly3P_dh_N"/>
    <property type="match status" value="1"/>
</dbReference>
<dbReference type="PIRSF" id="PIRSF000114">
    <property type="entry name" value="Glycerol-3-P_dh"/>
    <property type="match status" value="1"/>
</dbReference>
<dbReference type="PRINTS" id="PR00077">
    <property type="entry name" value="GPDHDRGNASE"/>
</dbReference>
<dbReference type="SUPFAM" id="SSF48179">
    <property type="entry name" value="6-phosphogluconate dehydrogenase C-terminal domain-like"/>
    <property type="match status" value="1"/>
</dbReference>
<dbReference type="SUPFAM" id="SSF51735">
    <property type="entry name" value="NAD(P)-binding Rossmann-fold domains"/>
    <property type="match status" value="1"/>
</dbReference>
<dbReference type="PROSITE" id="PS00957">
    <property type="entry name" value="NAD_G3PDH"/>
    <property type="match status" value="1"/>
</dbReference>
<gene>
    <name evidence="1" type="primary">gpsA</name>
    <name type="ordered locus">STM3700</name>
</gene>
<organism>
    <name type="scientific">Salmonella typhimurium (strain LT2 / SGSC1412 / ATCC 700720)</name>
    <dbReference type="NCBI Taxonomy" id="99287"/>
    <lineage>
        <taxon>Bacteria</taxon>
        <taxon>Pseudomonadati</taxon>
        <taxon>Pseudomonadota</taxon>
        <taxon>Gammaproteobacteria</taxon>
        <taxon>Enterobacterales</taxon>
        <taxon>Enterobacteriaceae</taxon>
        <taxon>Salmonella</taxon>
    </lineage>
</organism>
<proteinExistence type="inferred from homology"/>
<name>GPDA_SALTY</name>
<accession>P0A1P2</accession>
<accession>P40716</accession>
<evidence type="ECO:0000255" key="1">
    <source>
        <dbReference type="HAMAP-Rule" id="MF_00394"/>
    </source>
</evidence>
<evidence type="ECO:0000305" key="2"/>
<sequence length="339" mass="36343">MNQSNASMTVIGAGSYGTALAITLARNGHQVVLWGHDPKHIATLEHDRCNVAFLPDVPFPDTLHLESDLATALAASRNILVVVPSHVFSDVLRQIKPLMRPDARLVWATKGLEAETGRLLQDVAREALGDQIPLAVISGPTFAKELAAGLPTAISLASTDETFADDLQQLLHCGKSFRVYINADFIGVQLGGAVKNVIAIGAGMSDGIGFGANARTALITRGLTEMSRLGAALGADPATFMGMAGLGDLVLTCTDNQSRNRRFGMMLGQGMDVKGAQDKIGQVVEGYRNTKEVRELAHRFGVEMPITEEIYQVLYCGKNAREAALTLLGRARKEELSRH</sequence>
<comment type="function">
    <text evidence="1">Catalyzes the reduction of the glycolytic intermediate dihydroxyacetone phosphate (DHAP) to sn-glycerol 3-phosphate (G3P), the key precursor for phospholipid synthesis.</text>
</comment>
<comment type="catalytic activity">
    <reaction evidence="1">
        <text>sn-glycerol 3-phosphate + NAD(+) = dihydroxyacetone phosphate + NADH + H(+)</text>
        <dbReference type="Rhea" id="RHEA:11092"/>
        <dbReference type="ChEBI" id="CHEBI:15378"/>
        <dbReference type="ChEBI" id="CHEBI:57540"/>
        <dbReference type="ChEBI" id="CHEBI:57597"/>
        <dbReference type="ChEBI" id="CHEBI:57642"/>
        <dbReference type="ChEBI" id="CHEBI:57945"/>
        <dbReference type="EC" id="1.1.1.94"/>
    </reaction>
    <physiologicalReaction direction="right-to-left" evidence="1">
        <dbReference type="Rhea" id="RHEA:11094"/>
    </physiologicalReaction>
</comment>
<comment type="catalytic activity">
    <reaction evidence="1">
        <text>sn-glycerol 3-phosphate + NADP(+) = dihydroxyacetone phosphate + NADPH + H(+)</text>
        <dbReference type="Rhea" id="RHEA:11096"/>
        <dbReference type="ChEBI" id="CHEBI:15378"/>
        <dbReference type="ChEBI" id="CHEBI:57597"/>
        <dbReference type="ChEBI" id="CHEBI:57642"/>
        <dbReference type="ChEBI" id="CHEBI:57783"/>
        <dbReference type="ChEBI" id="CHEBI:58349"/>
        <dbReference type="EC" id="1.1.1.94"/>
    </reaction>
    <physiologicalReaction direction="right-to-left" evidence="1">
        <dbReference type="Rhea" id="RHEA:11098"/>
    </physiologicalReaction>
</comment>
<comment type="pathway">
    <text evidence="1">Membrane lipid metabolism; glycerophospholipid metabolism.</text>
</comment>
<comment type="subcellular location">
    <subcellularLocation>
        <location evidence="1">Cytoplasm</location>
    </subcellularLocation>
</comment>
<comment type="similarity">
    <text evidence="1">Belongs to the NAD-dependent glycerol-3-phosphate dehydrogenase family.</text>
</comment>
<comment type="sequence caution" evidence="2">
    <conflict type="frameshift">
        <sequence resource="EMBL" id="X59594"/>
    </conflict>
</comment>
<feature type="chain" id="PRO_0000138019" description="Glycerol-3-phosphate dehydrogenase [NAD(P)+]">
    <location>
        <begin position="1"/>
        <end position="339"/>
    </location>
</feature>
<feature type="active site" description="Proton acceptor" evidence="1">
    <location>
        <position position="195"/>
    </location>
</feature>
<feature type="binding site" evidence="1">
    <location>
        <position position="15"/>
    </location>
    <ligand>
        <name>NADPH</name>
        <dbReference type="ChEBI" id="CHEBI:57783"/>
    </ligand>
</feature>
<feature type="binding site" evidence="1">
    <location>
        <position position="16"/>
    </location>
    <ligand>
        <name>NADPH</name>
        <dbReference type="ChEBI" id="CHEBI:57783"/>
    </ligand>
</feature>
<feature type="binding site" evidence="1">
    <location>
        <position position="36"/>
    </location>
    <ligand>
        <name>NADPH</name>
        <dbReference type="ChEBI" id="CHEBI:57783"/>
    </ligand>
</feature>
<feature type="binding site" evidence="1">
    <location>
        <position position="110"/>
    </location>
    <ligand>
        <name>NADPH</name>
        <dbReference type="ChEBI" id="CHEBI:57783"/>
    </ligand>
</feature>
<feature type="binding site" evidence="1">
    <location>
        <position position="110"/>
    </location>
    <ligand>
        <name>sn-glycerol 3-phosphate</name>
        <dbReference type="ChEBI" id="CHEBI:57597"/>
    </ligand>
</feature>
<feature type="binding site" evidence="1">
    <location>
        <position position="139"/>
    </location>
    <ligand>
        <name>sn-glycerol 3-phosphate</name>
        <dbReference type="ChEBI" id="CHEBI:57597"/>
    </ligand>
</feature>
<feature type="binding site" evidence="1">
    <location>
        <position position="141"/>
    </location>
    <ligand>
        <name>sn-glycerol 3-phosphate</name>
        <dbReference type="ChEBI" id="CHEBI:57597"/>
    </ligand>
</feature>
<feature type="binding site" evidence="1">
    <location>
        <position position="143"/>
    </location>
    <ligand>
        <name>NADPH</name>
        <dbReference type="ChEBI" id="CHEBI:57783"/>
    </ligand>
</feature>
<feature type="binding site" evidence="1">
    <location>
        <position position="195"/>
    </location>
    <ligand>
        <name>sn-glycerol 3-phosphate</name>
        <dbReference type="ChEBI" id="CHEBI:57597"/>
    </ligand>
</feature>
<feature type="binding site" evidence="1">
    <location>
        <position position="248"/>
    </location>
    <ligand>
        <name>sn-glycerol 3-phosphate</name>
        <dbReference type="ChEBI" id="CHEBI:57597"/>
    </ligand>
</feature>
<feature type="binding site" evidence="1">
    <location>
        <position position="258"/>
    </location>
    <ligand>
        <name>sn-glycerol 3-phosphate</name>
        <dbReference type="ChEBI" id="CHEBI:57597"/>
    </ligand>
</feature>
<feature type="binding site" evidence="1">
    <location>
        <position position="259"/>
    </location>
    <ligand>
        <name>NADPH</name>
        <dbReference type="ChEBI" id="CHEBI:57783"/>
    </ligand>
</feature>
<feature type="binding site" evidence="1">
    <location>
        <position position="259"/>
    </location>
    <ligand>
        <name>sn-glycerol 3-phosphate</name>
        <dbReference type="ChEBI" id="CHEBI:57597"/>
    </ligand>
</feature>
<feature type="binding site" evidence="1">
    <location>
        <position position="260"/>
    </location>
    <ligand>
        <name>sn-glycerol 3-phosphate</name>
        <dbReference type="ChEBI" id="CHEBI:57597"/>
    </ligand>
</feature>
<feature type="binding site" evidence="1">
    <location>
        <position position="283"/>
    </location>
    <ligand>
        <name>NADPH</name>
        <dbReference type="ChEBI" id="CHEBI:57783"/>
    </ligand>
</feature>
<feature type="binding site" evidence="1">
    <location>
        <position position="285"/>
    </location>
    <ligand>
        <name>NADPH</name>
        <dbReference type="ChEBI" id="CHEBI:57783"/>
    </ligand>
</feature>
<feature type="sequence conflict" description="In Ref. 2." evidence="2" ref="2">
    <original>L</original>
    <variation>P</variation>
    <location>
        <position position="167"/>
    </location>
</feature>
<feature type="sequence conflict" description="In Ref. 2." evidence="2" ref="2">
    <original>A</original>
    <variation>R</variation>
    <location>
        <position position="232"/>
    </location>
</feature>
<keyword id="KW-0963">Cytoplasm</keyword>
<keyword id="KW-0444">Lipid biosynthesis</keyword>
<keyword id="KW-0443">Lipid metabolism</keyword>
<keyword id="KW-0520">NAD</keyword>
<keyword id="KW-0521">NADP</keyword>
<keyword id="KW-0547">Nucleotide-binding</keyword>
<keyword id="KW-0560">Oxidoreductase</keyword>
<keyword id="KW-0594">Phospholipid biosynthesis</keyword>
<keyword id="KW-1208">Phospholipid metabolism</keyword>
<keyword id="KW-1185">Reference proteome</keyword>
<reference key="1">
    <citation type="journal article" date="2001" name="Nature">
        <title>Complete genome sequence of Salmonella enterica serovar Typhimurium LT2.</title>
        <authorList>
            <person name="McClelland M."/>
            <person name="Sanderson K.E."/>
            <person name="Spieth J."/>
            <person name="Clifton S.W."/>
            <person name="Latreille P."/>
            <person name="Courtney L."/>
            <person name="Porwollik S."/>
            <person name="Ali J."/>
            <person name="Dante M."/>
            <person name="Du F."/>
            <person name="Hou S."/>
            <person name="Layman D."/>
            <person name="Leonard S."/>
            <person name="Nguyen C."/>
            <person name="Scott K."/>
            <person name="Holmes A."/>
            <person name="Grewal N."/>
            <person name="Mulvaney E."/>
            <person name="Ryan E."/>
            <person name="Sun H."/>
            <person name="Florea L."/>
            <person name="Miller W."/>
            <person name="Stoneking T."/>
            <person name="Nhan M."/>
            <person name="Waterston R."/>
            <person name="Wilson R.K."/>
        </authorList>
    </citation>
    <scope>NUCLEOTIDE SEQUENCE [LARGE SCALE GENOMIC DNA]</scope>
    <source>
        <strain>LT2 / SGSC1412 / ATCC 700720</strain>
    </source>
</reference>
<reference key="2">
    <citation type="submission" date="1991-05" db="EMBL/GenBank/DDBJ databases">
        <authorList>
            <person name="Sivaprasad A.V."/>
            <person name="Kuczek E.S."/>
            <person name="Bawden C.S."/>
            <person name="Rogers G.E."/>
        </authorList>
    </citation>
    <scope>NUCLEOTIDE SEQUENCE [GENOMIC DNA] OF 166-339</scope>
    <source>
        <strain>LT2</strain>
    </source>
</reference>
<protein>
    <recommendedName>
        <fullName evidence="1">Glycerol-3-phosphate dehydrogenase [NAD(P)+]</fullName>
        <ecNumber evidence="1">1.1.1.94</ecNumber>
    </recommendedName>
    <alternativeName>
        <fullName evidence="1">NAD(P)(+)-dependent glycerol-3-phosphate dehydrogenase</fullName>
    </alternativeName>
    <alternativeName>
        <fullName evidence="1">NAD(P)H-dependent dihydroxyacetone-phosphate reductase</fullName>
    </alternativeName>
</protein>